<keyword id="KW-0143">Chaperone</keyword>
<keyword id="KW-0963">Cytoplasm</keyword>
<keyword id="KW-1185">Reference proteome</keyword>
<keyword id="KW-0346">Stress response</keyword>
<accession>A8EWT7</accession>
<evidence type="ECO:0000255" key="1">
    <source>
        <dbReference type="HAMAP-Rule" id="MF_01151"/>
    </source>
</evidence>
<evidence type="ECO:0000256" key="2">
    <source>
        <dbReference type="SAM" id="MobiDB-lite"/>
    </source>
</evidence>
<gene>
    <name evidence="1" type="primary">grpE</name>
    <name type="ordered locus">Abu_2196</name>
</gene>
<name>GRPE_ALIB4</name>
<organism>
    <name type="scientific">Aliarcobacter butzleri (strain RM4018)</name>
    <name type="common">Arcobacter butzleri</name>
    <dbReference type="NCBI Taxonomy" id="367737"/>
    <lineage>
        <taxon>Bacteria</taxon>
        <taxon>Pseudomonadati</taxon>
        <taxon>Campylobacterota</taxon>
        <taxon>Epsilonproteobacteria</taxon>
        <taxon>Campylobacterales</taxon>
        <taxon>Arcobacteraceae</taxon>
        <taxon>Aliarcobacter</taxon>
    </lineage>
</organism>
<comment type="function">
    <text evidence="1">Participates actively in the response to hyperosmotic and heat shock by preventing the aggregation of stress-denatured proteins, in association with DnaK and GrpE. It is the nucleotide exchange factor for DnaK and may function as a thermosensor. Unfolded proteins bind initially to DnaJ; upon interaction with the DnaJ-bound protein, DnaK hydrolyzes its bound ATP, resulting in the formation of a stable complex. GrpE releases ADP from DnaK; ATP binding to DnaK triggers the release of the substrate protein, thus completing the reaction cycle. Several rounds of ATP-dependent interactions between DnaJ, DnaK and GrpE are required for fully efficient folding.</text>
</comment>
<comment type="subunit">
    <text evidence="1">Homodimer.</text>
</comment>
<comment type="subcellular location">
    <subcellularLocation>
        <location evidence="1">Cytoplasm</location>
    </subcellularLocation>
</comment>
<comment type="similarity">
    <text evidence="1">Belongs to the GrpE family.</text>
</comment>
<reference key="1">
    <citation type="journal article" date="2007" name="PLoS ONE">
        <title>The complete genome sequence and analysis of the Epsilonproteobacterium Arcobacter butzleri.</title>
        <authorList>
            <person name="Miller W.G."/>
            <person name="Parker C.T."/>
            <person name="Rubenfield M."/>
            <person name="Mendz G.L."/>
            <person name="Woesten M.M.S.M."/>
            <person name="Ussery D.W."/>
            <person name="Stolz J.F."/>
            <person name="Binnewies T.T."/>
            <person name="Hallin P.F."/>
            <person name="Wang G."/>
            <person name="Malek J.A."/>
            <person name="Rogosin A."/>
            <person name="Stanker L.H."/>
            <person name="Mandrell R.E."/>
        </authorList>
    </citation>
    <scope>NUCLEOTIDE SEQUENCE [LARGE SCALE GENOMIC DNA]</scope>
    <source>
        <strain>RM4018</strain>
    </source>
</reference>
<proteinExistence type="inferred from homology"/>
<dbReference type="EMBL" id="CP000361">
    <property type="protein sequence ID" value="ABV68410.1"/>
    <property type="molecule type" value="Genomic_DNA"/>
</dbReference>
<dbReference type="RefSeq" id="WP_004511081.1">
    <property type="nucleotide sequence ID" value="NC_009850.1"/>
</dbReference>
<dbReference type="SMR" id="A8EWT7"/>
<dbReference type="STRING" id="367737.Abu_2196"/>
<dbReference type="GeneID" id="24305121"/>
<dbReference type="KEGG" id="abu:Abu_2196"/>
<dbReference type="eggNOG" id="COG0576">
    <property type="taxonomic scope" value="Bacteria"/>
</dbReference>
<dbReference type="HOGENOM" id="CLU_057217_6_3_7"/>
<dbReference type="Proteomes" id="UP000001136">
    <property type="component" value="Chromosome"/>
</dbReference>
<dbReference type="GO" id="GO:0005829">
    <property type="term" value="C:cytosol"/>
    <property type="evidence" value="ECO:0007669"/>
    <property type="project" value="TreeGrafter"/>
</dbReference>
<dbReference type="GO" id="GO:0000774">
    <property type="term" value="F:adenyl-nucleotide exchange factor activity"/>
    <property type="evidence" value="ECO:0007669"/>
    <property type="project" value="InterPro"/>
</dbReference>
<dbReference type="GO" id="GO:0042803">
    <property type="term" value="F:protein homodimerization activity"/>
    <property type="evidence" value="ECO:0007669"/>
    <property type="project" value="InterPro"/>
</dbReference>
<dbReference type="GO" id="GO:0051087">
    <property type="term" value="F:protein-folding chaperone binding"/>
    <property type="evidence" value="ECO:0007669"/>
    <property type="project" value="InterPro"/>
</dbReference>
<dbReference type="GO" id="GO:0051082">
    <property type="term" value="F:unfolded protein binding"/>
    <property type="evidence" value="ECO:0007669"/>
    <property type="project" value="TreeGrafter"/>
</dbReference>
<dbReference type="GO" id="GO:0006457">
    <property type="term" value="P:protein folding"/>
    <property type="evidence" value="ECO:0007669"/>
    <property type="project" value="InterPro"/>
</dbReference>
<dbReference type="CDD" id="cd00446">
    <property type="entry name" value="GrpE"/>
    <property type="match status" value="1"/>
</dbReference>
<dbReference type="FunFam" id="2.30.22.10:FF:000001">
    <property type="entry name" value="Protein GrpE"/>
    <property type="match status" value="1"/>
</dbReference>
<dbReference type="Gene3D" id="3.90.20.20">
    <property type="match status" value="1"/>
</dbReference>
<dbReference type="Gene3D" id="2.30.22.10">
    <property type="entry name" value="Head domain of nucleotide exchange factor GrpE"/>
    <property type="match status" value="1"/>
</dbReference>
<dbReference type="HAMAP" id="MF_01151">
    <property type="entry name" value="GrpE"/>
    <property type="match status" value="1"/>
</dbReference>
<dbReference type="InterPro" id="IPR000740">
    <property type="entry name" value="GrpE"/>
</dbReference>
<dbReference type="InterPro" id="IPR013805">
    <property type="entry name" value="GrpE_coiled_coil"/>
</dbReference>
<dbReference type="InterPro" id="IPR009012">
    <property type="entry name" value="GrpE_head"/>
</dbReference>
<dbReference type="NCBIfam" id="NF010738">
    <property type="entry name" value="PRK14140.1"/>
    <property type="match status" value="1"/>
</dbReference>
<dbReference type="NCBIfam" id="NF010747">
    <property type="entry name" value="PRK14149.1"/>
    <property type="match status" value="1"/>
</dbReference>
<dbReference type="PANTHER" id="PTHR21237">
    <property type="entry name" value="GRPE PROTEIN"/>
    <property type="match status" value="1"/>
</dbReference>
<dbReference type="PANTHER" id="PTHR21237:SF23">
    <property type="entry name" value="GRPE PROTEIN HOMOLOG, MITOCHONDRIAL"/>
    <property type="match status" value="1"/>
</dbReference>
<dbReference type="Pfam" id="PF01025">
    <property type="entry name" value="GrpE"/>
    <property type="match status" value="1"/>
</dbReference>
<dbReference type="PRINTS" id="PR00773">
    <property type="entry name" value="GRPEPROTEIN"/>
</dbReference>
<dbReference type="SUPFAM" id="SSF58014">
    <property type="entry name" value="Coiled-coil domain of nucleotide exchange factor GrpE"/>
    <property type="match status" value="1"/>
</dbReference>
<dbReference type="SUPFAM" id="SSF51064">
    <property type="entry name" value="Head domain of nucleotide exchange factor GrpE"/>
    <property type="match status" value="1"/>
</dbReference>
<dbReference type="PROSITE" id="PS01071">
    <property type="entry name" value="GRPE"/>
    <property type="match status" value="1"/>
</dbReference>
<sequence length="185" mass="21330">MSEEKKDEILEQETVETKEEIKTEEAEQKTESLEEKVARLESELKESEEKFLRAYADFENMKKRLEKEKYQAIDYASEKFAKDLLTPLDTLEMALNSAKADVDANELLEKLKEGIELTLKNFITTFEKHNITKVETDGEFDPNVHNAVMQVDSAEHNSGQIVQELQKGYVLKDRLLRPSMVSIAN</sequence>
<protein>
    <recommendedName>
        <fullName evidence="1">Protein GrpE</fullName>
    </recommendedName>
    <alternativeName>
        <fullName evidence="1">HSP-70 cofactor</fullName>
    </alternativeName>
</protein>
<feature type="chain" id="PRO_1000065513" description="Protein GrpE">
    <location>
        <begin position="1"/>
        <end position="185"/>
    </location>
</feature>
<feature type="region of interest" description="Disordered" evidence="2">
    <location>
        <begin position="1"/>
        <end position="40"/>
    </location>
</feature>